<proteinExistence type="inferred from homology"/>
<keyword id="KW-0687">Ribonucleoprotein</keyword>
<keyword id="KW-0689">Ribosomal protein</keyword>
<keyword id="KW-0694">RNA-binding</keyword>
<keyword id="KW-0699">rRNA-binding</keyword>
<sequence>MTKGILGRKIGMTQVFGENGELIPVTVVEASQNVVLQKKTEEVDGYNAIQVGFEDKKAYKKDAKSNKYANKPAEGHAKKAGAAPKRFIREFRNVNVDEYEVGQEVTVDTFEAGDIIDVTGTSKGKGFQGAIKRHGQARGPMAHGSHFHRAPGSVGMASDASRVFKGQKMPGRMGGNTVTVQNLEVVQVDTENNVILVKGNVPGPKKGFVEIQTSIKKGNK</sequence>
<name>RL3_STAHJ</name>
<evidence type="ECO:0000255" key="1">
    <source>
        <dbReference type="HAMAP-Rule" id="MF_01325"/>
    </source>
</evidence>
<evidence type="ECO:0000305" key="2"/>
<comment type="function">
    <text evidence="1">One of the primary rRNA binding proteins, it binds directly near the 3'-end of the 23S rRNA, where it nucleates assembly of the 50S subunit.</text>
</comment>
<comment type="subunit">
    <text evidence="1">Part of the 50S ribosomal subunit. Forms a cluster with proteins L14 and L19.</text>
</comment>
<comment type="similarity">
    <text evidence="1">Belongs to the universal ribosomal protein uL3 family.</text>
</comment>
<protein>
    <recommendedName>
        <fullName evidence="1">Large ribosomal subunit protein uL3</fullName>
    </recommendedName>
    <alternativeName>
        <fullName evidence="2">50S ribosomal protein L3</fullName>
    </alternativeName>
</protein>
<reference key="1">
    <citation type="journal article" date="2005" name="J. Bacteriol.">
        <title>Whole-genome sequencing of Staphylococcus haemolyticus uncovers the extreme plasticity of its genome and the evolution of human-colonizing staphylococcal species.</title>
        <authorList>
            <person name="Takeuchi F."/>
            <person name="Watanabe S."/>
            <person name="Baba T."/>
            <person name="Yuzawa H."/>
            <person name="Ito T."/>
            <person name="Morimoto Y."/>
            <person name="Kuroda M."/>
            <person name="Cui L."/>
            <person name="Takahashi M."/>
            <person name="Ankai A."/>
            <person name="Baba S."/>
            <person name="Fukui S."/>
            <person name="Lee J.C."/>
            <person name="Hiramatsu K."/>
        </authorList>
    </citation>
    <scope>NUCLEOTIDE SEQUENCE [LARGE SCALE GENOMIC DNA]</scope>
    <source>
        <strain>JCSC1435</strain>
    </source>
</reference>
<feature type="chain" id="PRO_0000077161" description="Large ribosomal subunit protein uL3">
    <location>
        <begin position="1"/>
        <end position="220"/>
    </location>
</feature>
<gene>
    <name evidence="1" type="primary">rplC</name>
    <name type="ordered locus">SH0802</name>
</gene>
<dbReference type="EMBL" id="AP006716">
    <property type="protein sequence ID" value="BAE04111.1"/>
    <property type="molecule type" value="Genomic_DNA"/>
</dbReference>
<dbReference type="RefSeq" id="WP_011275125.1">
    <property type="nucleotide sequence ID" value="NC_007168.1"/>
</dbReference>
<dbReference type="SMR" id="Q4L8B4"/>
<dbReference type="GeneID" id="93780191"/>
<dbReference type="KEGG" id="sha:SH0802"/>
<dbReference type="eggNOG" id="COG0087">
    <property type="taxonomic scope" value="Bacteria"/>
</dbReference>
<dbReference type="HOGENOM" id="CLU_044142_4_1_9"/>
<dbReference type="OrthoDB" id="9806135at2"/>
<dbReference type="Proteomes" id="UP000000543">
    <property type="component" value="Chromosome"/>
</dbReference>
<dbReference type="GO" id="GO:0022625">
    <property type="term" value="C:cytosolic large ribosomal subunit"/>
    <property type="evidence" value="ECO:0007669"/>
    <property type="project" value="TreeGrafter"/>
</dbReference>
<dbReference type="GO" id="GO:0019843">
    <property type="term" value="F:rRNA binding"/>
    <property type="evidence" value="ECO:0007669"/>
    <property type="project" value="UniProtKB-UniRule"/>
</dbReference>
<dbReference type="GO" id="GO:0003735">
    <property type="term" value="F:structural constituent of ribosome"/>
    <property type="evidence" value="ECO:0007669"/>
    <property type="project" value="InterPro"/>
</dbReference>
<dbReference type="GO" id="GO:0006412">
    <property type="term" value="P:translation"/>
    <property type="evidence" value="ECO:0007669"/>
    <property type="project" value="UniProtKB-UniRule"/>
</dbReference>
<dbReference type="FunFam" id="2.40.30.10:FF:000004">
    <property type="entry name" value="50S ribosomal protein L3"/>
    <property type="match status" value="1"/>
</dbReference>
<dbReference type="FunFam" id="3.30.160.810:FF:000002">
    <property type="entry name" value="50S ribosomal protein L3"/>
    <property type="match status" value="1"/>
</dbReference>
<dbReference type="Gene3D" id="3.30.160.810">
    <property type="match status" value="1"/>
</dbReference>
<dbReference type="Gene3D" id="2.40.30.10">
    <property type="entry name" value="Translation factors"/>
    <property type="match status" value="1"/>
</dbReference>
<dbReference type="HAMAP" id="MF_01325_B">
    <property type="entry name" value="Ribosomal_uL3_B"/>
    <property type="match status" value="1"/>
</dbReference>
<dbReference type="InterPro" id="IPR000597">
    <property type="entry name" value="Ribosomal_uL3"/>
</dbReference>
<dbReference type="InterPro" id="IPR019927">
    <property type="entry name" value="Ribosomal_uL3_bac/org-type"/>
</dbReference>
<dbReference type="InterPro" id="IPR019926">
    <property type="entry name" value="Ribosomal_uL3_CS"/>
</dbReference>
<dbReference type="InterPro" id="IPR009000">
    <property type="entry name" value="Transl_B-barrel_sf"/>
</dbReference>
<dbReference type="NCBIfam" id="TIGR03625">
    <property type="entry name" value="L3_bact"/>
    <property type="match status" value="1"/>
</dbReference>
<dbReference type="PANTHER" id="PTHR11229">
    <property type="entry name" value="50S RIBOSOMAL PROTEIN L3"/>
    <property type="match status" value="1"/>
</dbReference>
<dbReference type="PANTHER" id="PTHR11229:SF16">
    <property type="entry name" value="LARGE RIBOSOMAL SUBUNIT PROTEIN UL3C"/>
    <property type="match status" value="1"/>
</dbReference>
<dbReference type="Pfam" id="PF00297">
    <property type="entry name" value="Ribosomal_L3"/>
    <property type="match status" value="1"/>
</dbReference>
<dbReference type="SUPFAM" id="SSF50447">
    <property type="entry name" value="Translation proteins"/>
    <property type="match status" value="1"/>
</dbReference>
<dbReference type="PROSITE" id="PS00474">
    <property type="entry name" value="RIBOSOMAL_L3"/>
    <property type="match status" value="1"/>
</dbReference>
<accession>Q4L8B4</accession>
<organism>
    <name type="scientific">Staphylococcus haemolyticus (strain JCSC1435)</name>
    <dbReference type="NCBI Taxonomy" id="279808"/>
    <lineage>
        <taxon>Bacteria</taxon>
        <taxon>Bacillati</taxon>
        <taxon>Bacillota</taxon>
        <taxon>Bacilli</taxon>
        <taxon>Bacillales</taxon>
        <taxon>Staphylococcaceae</taxon>
        <taxon>Staphylococcus</taxon>
    </lineage>
</organism>